<accession>P0C1D8</accession>
<accession>P26511</accession>
<accession>Q46062</accession>
<dbReference type="EC" id="1.2.1.11" evidence="1"/>
<dbReference type="EMBL" id="X57226">
    <property type="protein sequence ID" value="CAA40504.1"/>
    <property type="molecule type" value="Genomic_DNA"/>
</dbReference>
<dbReference type="EMBL" id="BA000036">
    <property type="protein sequence ID" value="BAB97645.1"/>
    <property type="molecule type" value="Genomic_DNA"/>
</dbReference>
<dbReference type="EMBL" id="BX927148">
    <property type="protein sequence ID" value="CAF18823.1"/>
    <property type="molecule type" value="Genomic_DNA"/>
</dbReference>
<dbReference type="PIR" id="S49978">
    <property type="entry name" value="S49978"/>
</dbReference>
<dbReference type="RefSeq" id="NP_599505.1">
    <property type="nucleotide sequence ID" value="NC_003450.3"/>
</dbReference>
<dbReference type="RefSeq" id="WP_011013506.1">
    <property type="nucleotide sequence ID" value="NC_006958.1"/>
</dbReference>
<dbReference type="SMR" id="P0C1D8"/>
<dbReference type="STRING" id="196627.cg0307"/>
<dbReference type="KEGG" id="cgb:cg0307"/>
<dbReference type="KEGG" id="cgl:Cgl0252"/>
<dbReference type="PATRIC" id="fig|196627.13.peg.256"/>
<dbReference type="eggNOG" id="COG0136">
    <property type="taxonomic scope" value="Bacteria"/>
</dbReference>
<dbReference type="HOGENOM" id="CLU_049966_0_0_11"/>
<dbReference type="OrthoDB" id="9805684at2"/>
<dbReference type="BioCyc" id="CORYNE:G18NG-9807-MONOMER"/>
<dbReference type="UniPathway" id="UPA00034">
    <property type="reaction ID" value="UER00016"/>
</dbReference>
<dbReference type="UniPathway" id="UPA00050">
    <property type="reaction ID" value="UER00463"/>
</dbReference>
<dbReference type="UniPathway" id="UPA00051">
    <property type="reaction ID" value="UER00464"/>
</dbReference>
<dbReference type="Proteomes" id="UP000000582">
    <property type="component" value="Chromosome"/>
</dbReference>
<dbReference type="Proteomes" id="UP000001009">
    <property type="component" value="Chromosome"/>
</dbReference>
<dbReference type="GO" id="GO:0004073">
    <property type="term" value="F:aspartate-semialdehyde dehydrogenase activity"/>
    <property type="evidence" value="ECO:0007669"/>
    <property type="project" value="UniProtKB-UniRule"/>
</dbReference>
<dbReference type="GO" id="GO:0051287">
    <property type="term" value="F:NAD binding"/>
    <property type="evidence" value="ECO:0007669"/>
    <property type="project" value="InterPro"/>
</dbReference>
<dbReference type="GO" id="GO:0050661">
    <property type="term" value="F:NADP binding"/>
    <property type="evidence" value="ECO:0007669"/>
    <property type="project" value="UniProtKB-UniRule"/>
</dbReference>
<dbReference type="GO" id="GO:0046983">
    <property type="term" value="F:protein dimerization activity"/>
    <property type="evidence" value="ECO:0007669"/>
    <property type="project" value="InterPro"/>
</dbReference>
<dbReference type="GO" id="GO:0071266">
    <property type="term" value="P:'de novo' L-methionine biosynthetic process"/>
    <property type="evidence" value="ECO:0007669"/>
    <property type="project" value="UniProtKB-UniRule"/>
</dbReference>
<dbReference type="GO" id="GO:0019877">
    <property type="term" value="P:diaminopimelate biosynthetic process"/>
    <property type="evidence" value="ECO:0007669"/>
    <property type="project" value="UniProtKB-UniRule"/>
</dbReference>
<dbReference type="GO" id="GO:0009097">
    <property type="term" value="P:isoleucine biosynthetic process"/>
    <property type="evidence" value="ECO:0007669"/>
    <property type="project" value="InterPro"/>
</dbReference>
<dbReference type="GO" id="GO:0009089">
    <property type="term" value="P:lysine biosynthetic process via diaminopimelate"/>
    <property type="evidence" value="ECO:0007669"/>
    <property type="project" value="UniProtKB-UniRule"/>
</dbReference>
<dbReference type="GO" id="GO:0009088">
    <property type="term" value="P:threonine biosynthetic process"/>
    <property type="evidence" value="ECO:0007669"/>
    <property type="project" value="UniProtKB-UniRule"/>
</dbReference>
<dbReference type="CDD" id="cd18131">
    <property type="entry name" value="ASADH_C_bac_euk_like"/>
    <property type="match status" value="1"/>
</dbReference>
<dbReference type="CDD" id="cd02316">
    <property type="entry name" value="VcASADH2_like_N"/>
    <property type="match status" value="1"/>
</dbReference>
<dbReference type="Gene3D" id="3.30.360.10">
    <property type="entry name" value="Dihydrodipicolinate Reductase, domain 2"/>
    <property type="match status" value="1"/>
</dbReference>
<dbReference type="Gene3D" id="3.40.50.720">
    <property type="entry name" value="NAD(P)-binding Rossmann-like Domain"/>
    <property type="match status" value="1"/>
</dbReference>
<dbReference type="HAMAP" id="MF_02121">
    <property type="entry name" value="ASADH"/>
    <property type="match status" value="1"/>
</dbReference>
<dbReference type="InterPro" id="IPR000319">
    <property type="entry name" value="Asp-semialdehyde_DH_CS"/>
</dbReference>
<dbReference type="InterPro" id="IPR012080">
    <property type="entry name" value="Asp_semialdehyde_DH"/>
</dbReference>
<dbReference type="InterPro" id="IPR005986">
    <property type="entry name" value="Asp_semialdehyde_DH_beta"/>
</dbReference>
<dbReference type="InterPro" id="IPR036291">
    <property type="entry name" value="NAD(P)-bd_dom_sf"/>
</dbReference>
<dbReference type="InterPro" id="IPR000534">
    <property type="entry name" value="Semialdehyde_DH_NAD-bd"/>
</dbReference>
<dbReference type="InterPro" id="IPR012280">
    <property type="entry name" value="Semialdhyde_DH_dimer_dom"/>
</dbReference>
<dbReference type="NCBIfam" id="TIGR01296">
    <property type="entry name" value="asd_B"/>
    <property type="match status" value="1"/>
</dbReference>
<dbReference type="NCBIfam" id="NF011456">
    <property type="entry name" value="PRK14874.1"/>
    <property type="match status" value="1"/>
</dbReference>
<dbReference type="PANTHER" id="PTHR46278:SF2">
    <property type="entry name" value="ASPARTATE-SEMIALDEHYDE DEHYDROGENASE"/>
    <property type="match status" value="1"/>
</dbReference>
<dbReference type="PANTHER" id="PTHR46278">
    <property type="entry name" value="DEHYDROGENASE, PUTATIVE-RELATED"/>
    <property type="match status" value="1"/>
</dbReference>
<dbReference type="Pfam" id="PF01118">
    <property type="entry name" value="Semialdhyde_dh"/>
    <property type="match status" value="1"/>
</dbReference>
<dbReference type="Pfam" id="PF02774">
    <property type="entry name" value="Semialdhyde_dhC"/>
    <property type="match status" value="1"/>
</dbReference>
<dbReference type="PIRSF" id="PIRSF000148">
    <property type="entry name" value="ASA_dh"/>
    <property type="match status" value="1"/>
</dbReference>
<dbReference type="SMART" id="SM00859">
    <property type="entry name" value="Semialdhyde_dh"/>
    <property type="match status" value="1"/>
</dbReference>
<dbReference type="SUPFAM" id="SSF55347">
    <property type="entry name" value="Glyceraldehyde-3-phosphate dehydrogenase-like, C-terminal domain"/>
    <property type="match status" value="1"/>
</dbReference>
<dbReference type="SUPFAM" id="SSF51735">
    <property type="entry name" value="NAD(P)-binding Rossmann-fold domains"/>
    <property type="match status" value="1"/>
</dbReference>
<dbReference type="PROSITE" id="PS01103">
    <property type="entry name" value="ASD"/>
    <property type="match status" value="1"/>
</dbReference>
<keyword id="KW-0028">Amino-acid biosynthesis</keyword>
<keyword id="KW-0220">Diaminopimelate biosynthesis</keyword>
<keyword id="KW-0457">Lysine biosynthesis</keyword>
<keyword id="KW-0486">Methionine biosynthesis</keyword>
<keyword id="KW-0521">NADP</keyword>
<keyword id="KW-0560">Oxidoreductase</keyword>
<keyword id="KW-1185">Reference proteome</keyword>
<keyword id="KW-0791">Threonine biosynthesis</keyword>
<sequence>MTTIAVVGATGQVGQVMRTLLEERNFPADTVRFFASPRSAGRKIEFRGTEIEVEDITQATEESLKDIDVALFSAGGTASKQYAPLFAAAGATVVDNSSAWRKDDEVPLIVSEVNPSDKDSLVKGIIANPNCTTMAAMPVLKPLHDAAGLVKLHVSSYQAVSGSGLAGVETLAKQVAAVGDHNVEFVHDGQAADAGDVGPYVSPIAYNVLPFAGNLVDDGTFETDEEQKLRNESRKILGLPDLKVSGTCVRVPVFTGHTLTIHAEFDKAITVDQAQEILGAASGVKLVDVPTPLAAAGIDESLVGRIRQDSTVDDNRGLVLVVSGDNLRKGAALNTIQIAELLVK</sequence>
<evidence type="ECO:0000255" key="1">
    <source>
        <dbReference type="HAMAP-Rule" id="MF_02121"/>
    </source>
</evidence>
<gene>
    <name evidence="1" type="primary">asd</name>
    <name type="ordered locus">Cgl0252</name>
    <name type="ordered locus">cg0307</name>
</gene>
<reference key="1">
    <citation type="journal article" date="1990" name="Mol. Gen. Genet.">
        <title>Aspartokinase genes lysC alpha and lysC beta overlap and are adjacent to the aspartate beta-semialdehyde dehydrogenase gene asd in Corynebacterium glutamicum.</title>
        <authorList>
            <person name="Kalinowski J."/>
            <person name="Bachmann B."/>
            <person name="Thierbach G."/>
            <person name="Puehler A."/>
        </authorList>
    </citation>
    <scope>NUCLEOTIDE SEQUENCE [GENOMIC DNA]</scope>
    <source>
        <strain>ATCC 13032 / DSM 20300 / JCM 1318 / BCRC 11384 / CCUG 27702 / LMG 3730 / NBRC 12168 / NCIMB 10025 / NRRL B-2784 / 534</strain>
    </source>
</reference>
<reference key="2">
    <citation type="journal article" date="2003" name="Appl. Microbiol. Biotechnol.">
        <title>The Corynebacterium glutamicum genome: features and impacts on biotechnological processes.</title>
        <authorList>
            <person name="Ikeda M."/>
            <person name="Nakagawa S."/>
        </authorList>
    </citation>
    <scope>NUCLEOTIDE SEQUENCE [LARGE SCALE GENOMIC DNA]</scope>
    <source>
        <strain>ATCC 13032 / DSM 20300 / JCM 1318 / BCRC 11384 / CCUG 27702 / LMG 3730 / NBRC 12168 / NCIMB 10025 / NRRL B-2784 / 534</strain>
    </source>
</reference>
<reference key="3">
    <citation type="journal article" date="2003" name="J. Biotechnol.">
        <title>The complete Corynebacterium glutamicum ATCC 13032 genome sequence and its impact on the production of L-aspartate-derived amino acids and vitamins.</title>
        <authorList>
            <person name="Kalinowski J."/>
            <person name="Bathe B."/>
            <person name="Bartels D."/>
            <person name="Bischoff N."/>
            <person name="Bott M."/>
            <person name="Burkovski A."/>
            <person name="Dusch N."/>
            <person name="Eggeling L."/>
            <person name="Eikmanns B.J."/>
            <person name="Gaigalat L."/>
            <person name="Goesmann A."/>
            <person name="Hartmann M."/>
            <person name="Huthmacher K."/>
            <person name="Kraemer R."/>
            <person name="Linke B."/>
            <person name="McHardy A.C."/>
            <person name="Meyer F."/>
            <person name="Moeckel B."/>
            <person name="Pfefferle W."/>
            <person name="Puehler A."/>
            <person name="Rey D.A."/>
            <person name="Rueckert C."/>
            <person name="Rupp O."/>
            <person name="Sahm H."/>
            <person name="Wendisch V.F."/>
            <person name="Wiegraebe I."/>
            <person name="Tauch A."/>
        </authorList>
    </citation>
    <scope>NUCLEOTIDE SEQUENCE [LARGE SCALE GENOMIC DNA]</scope>
    <source>
        <strain>ATCC 13032 / DSM 20300 / JCM 1318 / BCRC 11384 / CCUG 27702 / LMG 3730 / NBRC 12168 / NCIMB 10025 / NRRL B-2784 / 534</strain>
    </source>
</reference>
<organism>
    <name type="scientific">Corynebacterium glutamicum (strain ATCC 13032 / DSM 20300 / JCM 1318 / BCRC 11384 / CCUG 27702 / LMG 3730 / NBRC 12168 / NCIMB 10025 / NRRL B-2784 / 534)</name>
    <dbReference type="NCBI Taxonomy" id="196627"/>
    <lineage>
        <taxon>Bacteria</taxon>
        <taxon>Bacillati</taxon>
        <taxon>Actinomycetota</taxon>
        <taxon>Actinomycetes</taxon>
        <taxon>Mycobacteriales</taxon>
        <taxon>Corynebacteriaceae</taxon>
        <taxon>Corynebacterium</taxon>
    </lineage>
</organism>
<feature type="chain" id="PRO_0000141368" description="Aspartate-semialdehyde dehydrogenase">
    <location>
        <begin position="1"/>
        <end position="344"/>
    </location>
</feature>
<feature type="active site" description="Acyl-thioester intermediate" evidence="1">
    <location>
        <position position="131"/>
    </location>
</feature>
<feature type="active site" description="Proton acceptor" evidence="1">
    <location>
        <position position="257"/>
    </location>
</feature>
<feature type="binding site" evidence="1">
    <location>
        <begin position="10"/>
        <end position="13"/>
    </location>
    <ligand>
        <name>NADP(+)</name>
        <dbReference type="ChEBI" id="CHEBI:58349"/>
    </ligand>
</feature>
<feature type="binding site" evidence="1">
    <location>
        <begin position="38"/>
        <end position="39"/>
    </location>
    <ligand>
        <name>NADP(+)</name>
        <dbReference type="ChEBI" id="CHEBI:58349"/>
    </ligand>
</feature>
<feature type="binding site" evidence="1">
    <location>
        <position position="101"/>
    </location>
    <ligand>
        <name>phosphate</name>
        <dbReference type="ChEBI" id="CHEBI:43474"/>
    </ligand>
</feature>
<feature type="binding site" evidence="1">
    <location>
        <position position="158"/>
    </location>
    <ligand>
        <name>substrate</name>
    </ligand>
</feature>
<feature type="binding site" evidence="1">
    <location>
        <begin position="161"/>
        <end position="162"/>
    </location>
    <ligand>
        <name>NADP(+)</name>
        <dbReference type="ChEBI" id="CHEBI:58349"/>
    </ligand>
</feature>
<feature type="binding site" evidence="1">
    <location>
        <position position="228"/>
    </location>
    <ligand>
        <name>phosphate</name>
        <dbReference type="ChEBI" id="CHEBI:43474"/>
    </ligand>
</feature>
<feature type="binding site" evidence="1">
    <location>
        <position position="250"/>
    </location>
    <ligand>
        <name>substrate</name>
    </ligand>
</feature>
<feature type="binding site" evidence="1">
    <location>
        <position position="326"/>
    </location>
    <ligand>
        <name>NADP(+)</name>
        <dbReference type="ChEBI" id="CHEBI:58349"/>
    </ligand>
</feature>
<name>DHAS_CORGL</name>
<comment type="function">
    <text evidence="1">Catalyzes the NADPH-dependent formation of L-aspartate-semialdehyde (L-ASA) by the reductive dephosphorylation of L-aspartyl-4-phosphate.</text>
</comment>
<comment type="catalytic activity">
    <reaction evidence="1">
        <text>L-aspartate 4-semialdehyde + phosphate + NADP(+) = 4-phospho-L-aspartate + NADPH + H(+)</text>
        <dbReference type="Rhea" id="RHEA:24284"/>
        <dbReference type="ChEBI" id="CHEBI:15378"/>
        <dbReference type="ChEBI" id="CHEBI:43474"/>
        <dbReference type="ChEBI" id="CHEBI:57535"/>
        <dbReference type="ChEBI" id="CHEBI:57783"/>
        <dbReference type="ChEBI" id="CHEBI:58349"/>
        <dbReference type="ChEBI" id="CHEBI:537519"/>
        <dbReference type="EC" id="1.2.1.11"/>
    </reaction>
</comment>
<comment type="pathway">
    <text evidence="1">Amino-acid biosynthesis; L-lysine biosynthesis via DAP pathway; (S)-tetrahydrodipicolinate from L-aspartate: step 2/4.</text>
</comment>
<comment type="pathway">
    <text evidence="1">Amino-acid biosynthesis; L-methionine biosynthesis via de novo pathway; L-homoserine from L-aspartate: step 2/3.</text>
</comment>
<comment type="pathway">
    <text evidence="1">Amino-acid biosynthesis; L-threonine biosynthesis; L-threonine from L-aspartate: step 2/5.</text>
</comment>
<comment type="subunit">
    <text evidence="1">Homodimer.</text>
</comment>
<comment type="similarity">
    <text evidence="1">Belongs to the aspartate-semialdehyde dehydrogenase family.</text>
</comment>
<protein>
    <recommendedName>
        <fullName evidence="1">Aspartate-semialdehyde dehydrogenase</fullName>
        <shortName evidence="1">ASA dehydrogenase</shortName>
        <shortName evidence="1">ASADH</shortName>
        <ecNumber evidence="1">1.2.1.11</ecNumber>
    </recommendedName>
    <alternativeName>
        <fullName evidence="1">Aspartate-beta-semialdehyde dehydrogenase</fullName>
    </alternativeName>
</protein>
<proteinExistence type="inferred from homology"/>